<sequence>MTSNRSTAWPAPAKLNLFLHVNGRRADGYHELQTLFQFIDYCDYLDFAVNDSGSLTLHSEMEAVVANSDNLILKAAKSLQEYTGTHQGAEIWLDKKLPMGGGIGGGSSDAATTLVALNHLWQTQLSQDELAKIGLSLGADVPVFINGLAAFAEGVGEKLIPVEAPENWYLILTPDVHVSTAEVFNDPLLPRDTPKLSMDDLMSSDWHNDCQPRVAERYPQVAKALAWLIEYAPSRMTGTGACVFGIFDTRQQAEHVFAKLPAGLCGFIAKGTNKSPLALRLTQH</sequence>
<feature type="chain" id="PRO_1000007889" description="4-diphosphocytidyl-2-C-methyl-D-erythritol kinase">
    <location>
        <begin position="1"/>
        <end position="284"/>
    </location>
</feature>
<feature type="active site" evidence="1">
    <location>
        <position position="14"/>
    </location>
</feature>
<feature type="active site" evidence="1">
    <location>
        <position position="140"/>
    </location>
</feature>
<feature type="binding site" evidence="1">
    <location>
        <begin position="98"/>
        <end position="108"/>
    </location>
    <ligand>
        <name>ATP</name>
        <dbReference type="ChEBI" id="CHEBI:30616"/>
    </ligand>
</feature>
<gene>
    <name evidence="1" type="primary">ispE</name>
    <name type="ordered locus">Shew_2915</name>
</gene>
<name>ISPE_SHELP</name>
<comment type="function">
    <text evidence="1">Catalyzes the phosphorylation of the position 2 hydroxy group of 4-diphosphocytidyl-2C-methyl-D-erythritol.</text>
</comment>
<comment type="catalytic activity">
    <reaction evidence="1">
        <text>4-CDP-2-C-methyl-D-erythritol + ATP = 4-CDP-2-C-methyl-D-erythritol 2-phosphate + ADP + H(+)</text>
        <dbReference type="Rhea" id="RHEA:18437"/>
        <dbReference type="ChEBI" id="CHEBI:15378"/>
        <dbReference type="ChEBI" id="CHEBI:30616"/>
        <dbReference type="ChEBI" id="CHEBI:57823"/>
        <dbReference type="ChEBI" id="CHEBI:57919"/>
        <dbReference type="ChEBI" id="CHEBI:456216"/>
        <dbReference type="EC" id="2.7.1.148"/>
    </reaction>
</comment>
<comment type="pathway">
    <text evidence="1">Isoprenoid biosynthesis; isopentenyl diphosphate biosynthesis via DXP pathway; isopentenyl diphosphate from 1-deoxy-D-xylulose 5-phosphate: step 3/6.</text>
</comment>
<comment type="similarity">
    <text evidence="1">Belongs to the GHMP kinase family. IspE subfamily.</text>
</comment>
<reference key="1">
    <citation type="submission" date="2007-03" db="EMBL/GenBank/DDBJ databases">
        <title>Complete sequence of Shewanella loihica PV-4.</title>
        <authorList>
            <consortium name="US DOE Joint Genome Institute"/>
            <person name="Copeland A."/>
            <person name="Lucas S."/>
            <person name="Lapidus A."/>
            <person name="Barry K."/>
            <person name="Detter J.C."/>
            <person name="Glavina del Rio T."/>
            <person name="Hammon N."/>
            <person name="Israni S."/>
            <person name="Dalin E."/>
            <person name="Tice H."/>
            <person name="Pitluck S."/>
            <person name="Chain P."/>
            <person name="Malfatti S."/>
            <person name="Shin M."/>
            <person name="Vergez L."/>
            <person name="Schmutz J."/>
            <person name="Larimer F."/>
            <person name="Land M."/>
            <person name="Hauser L."/>
            <person name="Kyrpides N."/>
            <person name="Mikhailova N."/>
            <person name="Romine M.F."/>
            <person name="Serres G."/>
            <person name="Fredrickson J."/>
            <person name="Tiedje J."/>
            <person name="Richardson P."/>
        </authorList>
    </citation>
    <scope>NUCLEOTIDE SEQUENCE [LARGE SCALE GENOMIC DNA]</scope>
    <source>
        <strain>ATCC BAA-1088 / PV-4</strain>
    </source>
</reference>
<keyword id="KW-0067">ATP-binding</keyword>
<keyword id="KW-0414">Isoprene biosynthesis</keyword>
<keyword id="KW-0418">Kinase</keyword>
<keyword id="KW-0547">Nucleotide-binding</keyword>
<keyword id="KW-1185">Reference proteome</keyword>
<keyword id="KW-0808">Transferase</keyword>
<protein>
    <recommendedName>
        <fullName evidence="1">4-diphosphocytidyl-2-C-methyl-D-erythritol kinase</fullName>
        <shortName evidence="1">CMK</shortName>
        <ecNumber evidence="1">2.7.1.148</ecNumber>
    </recommendedName>
    <alternativeName>
        <fullName evidence="1">4-(cytidine-5'-diphospho)-2-C-methyl-D-erythritol kinase</fullName>
    </alternativeName>
</protein>
<proteinExistence type="inferred from homology"/>
<organism>
    <name type="scientific">Shewanella loihica (strain ATCC BAA-1088 / PV-4)</name>
    <dbReference type="NCBI Taxonomy" id="323850"/>
    <lineage>
        <taxon>Bacteria</taxon>
        <taxon>Pseudomonadati</taxon>
        <taxon>Pseudomonadota</taxon>
        <taxon>Gammaproteobacteria</taxon>
        <taxon>Alteromonadales</taxon>
        <taxon>Shewanellaceae</taxon>
        <taxon>Shewanella</taxon>
    </lineage>
</organism>
<evidence type="ECO:0000255" key="1">
    <source>
        <dbReference type="HAMAP-Rule" id="MF_00061"/>
    </source>
</evidence>
<accession>A3QH33</accession>
<dbReference type="EC" id="2.7.1.148" evidence="1"/>
<dbReference type="EMBL" id="CP000606">
    <property type="protein sequence ID" value="ABO24781.1"/>
    <property type="molecule type" value="Genomic_DNA"/>
</dbReference>
<dbReference type="RefSeq" id="WP_011866712.1">
    <property type="nucleotide sequence ID" value="NC_009092.1"/>
</dbReference>
<dbReference type="SMR" id="A3QH33"/>
<dbReference type="STRING" id="323850.Shew_2915"/>
<dbReference type="KEGG" id="slo:Shew_2915"/>
<dbReference type="eggNOG" id="COG1947">
    <property type="taxonomic scope" value="Bacteria"/>
</dbReference>
<dbReference type="HOGENOM" id="CLU_053057_3_0_6"/>
<dbReference type="OrthoDB" id="9809438at2"/>
<dbReference type="UniPathway" id="UPA00056">
    <property type="reaction ID" value="UER00094"/>
</dbReference>
<dbReference type="Proteomes" id="UP000001558">
    <property type="component" value="Chromosome"/>
</dbReference>
<dbReference type="GO" id="GO:0050515">
    <property type="term" value="F:4-(cytidine 5'-diphospho)-2-C-methyl-D-erythritol kinase activity"/>
    <property type="evidence" value="ECO:0007669"/>
    <property type="project" value="UniProtKB-UniRule"/>
</dbReference>
<dbReference type="GO" id="GO:0005524">
    <property type="term" value="F:ATP binding"/>
    <property type="evidence" value="ECO:0007669"/>
    <property type="project" value="UniProtKB-UniRule"/>
</dbReference>
<dbReference type="GO" id="GO:0019288">
    <property type="term" value="P:isopentenyl diphosphate biosynthetic process, methylerythritol 4-phosphate pathway"/>
    <property type="evidence" value="ECO:0007669"/>
    <property type="project" value="UniProtKB-UniRule"/>
</dbReference>
<dbReference type="GO" id="GO:0016114">
    <property type="term" value="P:terpenoid biosynthetic process"/>
    <property type="evidence" value="ECO:0007669"/>
    <property type="project" value="InterPro"/>
</dbReference>
<dbReference type="FunFam" id="3.30.230.10:FF:000022">
    <property type="entry name" value="4-diphosphocytidyl-2-C-methyl-D-erythritol kinase"/>
    <property type="match status" value="1"/>
</dbReference>
<dbReference type="Gene3D" id="3.30.230.10">
    <property type="match status" value="1"/>
</dbReference>
<dbReference type="Gene3D" id="3.30.70.890">
    <property type="entry name" value="GHMP kinase, C-terminal domain"/>
    <property type="match status" value="1"/>
</dbReference>
<dbReference type="HAMAP" id="MF_00061">
    <property type="entry name" value="IspE"/>
    <property type="match status" value="1"/>
</dbReference>
<dbReference type="InterPro" id="IPR013750">
    <property type="entry name" value="GHMP_kinase_C_dom"/>
</dbReference>
<dbReference type="InterPro" id="IPR036554">
    <property type="entry name" value="GHMP_kinase_C_sf"/>
</dbReference>
<dbReference type="InterPro" id="IPR006204">
    <property type="entry name" value="GHMP_kinase_N_dom"/>
</dbReference>
<dbReference type="InterPro" id="IPR004424">
    <property type="entry name" value="IspE"/>
</dbReference>
<dbReference type="InterPro" id="IPR020568">
    <property type="entry name" value="Ribosomal_Su5_D2-typ_SF"/>
</dbReference>
<dbReference type="InterPro" id="IPR014721">
    <property type="entry name" value="Ribsml_uS5_D2-typ_fold_subgr"/>
</dbReference>
<dbReference type="NCBIfam" id="TIGR00154">
    <property type="entry name" value="ispE"/>
    <property type="match status" value="1"/>
</dbReference>
<dbReference type="NCBIfam" id="NF011202">
    <property type="entry name" value="PRK14608.1"/>
    <property type="match status" value="1"/>
</dbReference>
<dbReference type="PANTHER" id="PTHR43527">
    <property type="entry name" value="4-DIPHOSPHOCYTIDYL-2-C-METHYL-D-ERYTHRITOL KINASE, CHLOROPLASTIC"/>
    <property type="match status" value="1"/>
</dbReference>
<dbReference type="PANTHER" id="PTHR43527:SF2">
    <property type="entry name" value="4-DIPHOSPHOCYTIDYL-2-C-METHYL-D-ERYTHRITOL KINASE, CHLOROPLASTIC"/>
    <property type="match status" value="1"/>
</dbReference>
<dbReference type="Pfam" id="PF08544">
    <property type="entry name" value="GHMP_kinases_C"/>
    <property type="match status" value="1"/>
</dbReference>
<dbReference type="Pfam" id="PF00288">
    <property type="entry name" value="GHMP_kinases_N"/>
    <property type="match status" value="1"/>
</dbReference>
<dbReference type="PIRSF" id="PIRSF010376">
    <property type="entry name" value="IspE"/>
    <property type="match status" value="1"/>
</dbReference>
<dbReference type="SUPFAM" id="SSF55060">
    <property type="entry name" value="GHMP Kinase, C-terminal domain"/>
    <property type="match status" value="1"/>
</dbReference>
<dbReference type="SUPFAM" id="SSF54211">
    <property type="entry name" value="Ribosomal protein S5 domain 2-like"/>
    <property type="match status" value="1"/>
</dbReference>